<gene>
    <name evidence="1" type="primary">yajQ</name>
    <name type="ordered locus">ECDH10B_0382</name>
</gene>
<keyword id="KW-0547">Nucleotide-binding</keyword>
<feature type="chain" id="PRO_1000130621" description="Nucleotide-binding protein YajQ">
    <location>
        <begin position="1"/>
        <end position="163"/>
    </location>
</feature>
<evidence type="ECO:0000255" key="1">
    <source>
        <dbReference type="HAMAP-Rule" id="MF_00632"/>
    </source>
</evidence>
<dbReference type="EMBL" id="CP000948">
    <property type="protein sequence ID" value="ACB01554.1"/>
    <property type="molecule type" value="Genomic_DNA"/>
</dbReference>
<dbReference type="RefSeq" id="WP_001138904.1">
    <property type="nucleotide sequence ID" value="NC_010473.1"/>
</dbReference>
<dbReference type="BMRB" id="B1XFL4"/>
<dbReference type="SMR" id="B1XFL4"/>
<dbReference type="GeneID" id="93777034"/>
<dbReference type="KEGG" id="ecd:ECDH10B_0382"/>
<dbReference type="HOGENOM" id="CLU_099839_1_0_6"/>
<dbReference type="GO" id="GO:0005829">
    <property type="term" value="C:cytosol"/>
    <property type="evidence" value="ECO:0007669"/>
    <property type="project" value="TreeGrafter"/>
</dbReference>
<dbReference type="GO" id="GO:0000166">
    <property type="term" value="F:nucleotide binding"/>
    <property type="evidence" value="ECO:0007669"/>
    <property type="project" value="TreeGrafter"/>
</dbReference>
<dbReference type="CDD" id="cd11740">
    <property type="entry name" value="YajQ_like"/>
    <property type="match status" value="1"/>
</dbReference>
<dbReference type="FunFam" id="3.30.70.860:FF:000001">
    <property type="entry name" value="UPF0234 protein YajQ"/>
    <property type="match status" value="1"/>
</dbReference>
<dbReference type="FunFam" id="3.30.70.990:FF:000001">
    <property type="entry name" value="UPF0234 protein YajQ"/>
    <property type="match status" value="1"/>
</dbReference>
<dbReference type="Gene3D" id="3.30.70.860">
    <property type="match status" value="1"/>
</dbReference>
<dbReference type="Gene3D" id="3.30.70.990">
    <property type="entry name" value="YajQ-like, domain 2"/>
    <property type="match status" value="1"/>
</dbReference>
<dbReference type="HAMAP" id="MF_00632">
    <property type="entry name" value="YajQ"/>
    <property type="match status" value="1"/>
</dbReference>
<dbReference type="InterPro" id="IPR007551">
    <property type="entry name" value="DUF520"/>
</dbReference>
<dbReference type="InterPro" id="IPR035571">
    <property type="entry name" value="UPF0234-like_C"/>
</dbReference>
<dbReference type="InterPro" id="IPR035570">
    <property type="entry name" value="UPF0234_N"/>
</dbReference>
<dbReference type="InterPro" id="IPR036183">
    <property type="entry name" value="YajQ-like_sf"/>
</dbReference>
<dbReference type="NCBIfam" id="NF003819">
    <property type="entry name" value="PRK05412.1"/>
    <property type="match status" value="1"/>
</dbReference>
<dbReference type="PANTHER" id="PTHR30476">
    <property type="entry name" value="UPF0234 PROTEIN YAJQ"/>
    <property type="match status" value="1"/>
</dbReference>
<dbReference type="PANTHER" id="PTHR30476:SF0">
    <property type="entry name" value="UPF0234 PROTEIN YAJQ"/>
    <property type="match status" value="1"/>
</dbReference>
<dbReference type="Pfam" id="PF04461">
    <property type="entry name" value="DUF520"/>
    <property type="match status" value="1"/>
</dbReference>
<dbReference type="SUPFAM" id="SSF89963">
    <property type="entry name" value="YajQ-like"/>
    <property type="match status" value="2"/>
</dbReference>
<protein>
    <recommendedName>
        <fullName evidence="1">Nucleotide-binding protein YajQ</fullName>
    </recommendedName>
</protein>
<proteinExistence type="inferred from homology"/>
<sequence length="163" mass="18344">MPSFDIVSEVDLQEARNAVDNASREVESRFDFRNVEASFELNDASKTIKVLSESDFQVNQLLDILRAKLLKRGIEGSSLDVPENIVHSGKTWFVEAKLKQGIESATQKKIVKMIKDSKLKVQAQIQGDEIRVTGKSRDDLQAVMAMVRGGDLGQPFQFKNFRD</sequence>
<reference key="1">
    <citation type="journal article" date="2008" name="J. Bacteriol.">
        <title>The complete genome sequence of Escherichia coli DH10B: insights into the biology of a laboratory workhorse.</title>
        <authorList>
            <person name="Durfee T."/>
            <person name="Nelson R."/>
            <person name="Baldwin S."/>
            <person name="Plunkett G. III"/>
            <person name="Burland V."/>
            <person name="Mau B."/>
            <person name="Petrosino J.F."/>
            <person name="Qin X."/>
            <person name="Muzny D.M."/>
            <person name="Ayele M."/>
            <person name="Gibbs R.A."/>
            <person name="Csorgo B."/>
            <person name="Posfai G."/>
            <person name="Weinstock G.M."/>
            <person name="Blattner F.R."/>
        </authorList>
    </citation>
    <scope>NUCLEOTIDE SEQUENCE [LARGE SCALE GENOMIC DNA]</scope>
    <source>
        <strain>K12 / DH10B</strain>
    </source>
</reference>
<accession>B1XFL4</accession>
<comment type="function">
    <text evidence="1">Nucleotide-binding protein.</text>
</comment>
<comment type="similarity">
    <text evidence="1">Belongs to the YajQ family.</text>
</comment>
<name>YAJQ_ECODH</name>
<organism>
    <name type="scientific">Escherichia coli (strain K12 / DH10B)</name>
    <dbReference type="NCBI Taxonomy" id="316385"/>
    <lineage>
        <taxon>Bacteria</taxon>
        <taxon>Pseudomonadati</taxon>
        <taxon>Pseudomonadota</taxon>
        <taxon>Gammaproteobacteria</taxon>
        <taxon>Enterobacterales</taxon>
        <taxon>Enterobacteriaceae</taxon>
        <taxon>Escherichia</taxon>
    </lineage>
</organism>